<organism>
    <name type="scientific">Streptococcus pyogenes serotype M1</name>
    <dbReference type="NCBI Taxonomy" id="301447"/>
    <lineage>
        <taxon>Bacteria</taxon>
        <taxon>Bacillati</taxon>
        <taxon>Bacillota</taxon>
        <taxon>Bacilli</taxon>
        <taxon>Lactobacillales</taxon>
        <taxon>Streptococcaceae</taxon>
        <taxon>Streptococcus</taxon>
    </lineage>
</organism>
<feature type="chain" id="PRO_0000182542" description="Heat-inducible transcription repressor HrcA">
    <location>
        <begin position="1"/>
        <end position="344"/>
    </location>
</feature>
<proteinExistence type="inferred from homology"/>
<dbReference type="EMBL" id="AE004092">
    <property type="protein sequence ID" value="AAK34503.1"/>
    <property type="molecule type" value="Genomic_DNA"/>
</dbReference>
<dbReference type="EMBL" id="CP000017">
    <property type="protein sequence ID" value="AAZ52118.1"/>
    <property type="molecule type" value="Genomic_DNA"/>
</dbReference>
<dbReference type="RefSeq" id="NP_269782.1">
    <property type="nucleotide sequence ID" value="NC_002737.2"/>
</dbReference>
<dbReference type="SMR" id="Q99YC7"/>
<dbReference type="PaxDb" id="1314-HKU360_01555"/>
<dbReference type="KEGG" id="spy:SPy_1763"/>
<dbReference type="KEGG" id="spz:M5005_Spy1500"/>
<dbReference type="PATRIC" id="fig|160490.10.peg.1533"/>
<dbReference type="HOGENOM" id="CLU_050019_1_0_9"/>
<dbReference type="OMA" id="GPKRMDY"/>
<dbReference type="Proteomes" id="UP000000750">
    <property type="component" value="Chromosome"/>
</dbReference>
<dbReference type="GO" id="GO:0003677">
    <property type="term" value="F:DNA binding"/>
    <property type="evidence" value="ECO:0007669"/>
    <property type="project" value="InterPro"/>
</dbReference>
<dbReference type="GO" id="GO:0045892">
    <property type="term" value="P:negative regulation of DNA-templated transcription"/>
    <property type="evidence" value="ECO:0007669"/>
    <property type="project" value="UniProtKB-UniRule"/>
</dbReference>
<dbReference type="Gene3D" id="3.30.450.40">
    <property type="match status" value="1"/>
</dbReference>
<dbReference type="Gene3D" id="3.30.390.60">
    <property type="entry name" value="Heat-inducible transcription repressor hrca homolog, domain 3"/>
    <property type="match status" value="1"/>
</dbReference>
<dbReference type="Gene3D" id="1.10.10.10">
    <property type="entry name" value="Winged helix-like DNA-binding domain superfamily/Winged helix DNA-binding domain"/>
    <property type="match status" value="1"/>
</dbReference>
<dbReference type="HAMAP" id="MF_00081">
    <property type="entry name" value="HrcA"/>
    <property type="match status" value="1"/>
</dbReference>
<dbReference type="InterPro" id="IPR029016">
    <property type="entry name" value="GAF-like_dom_sf"/>
</dbReference>
<dbReference type="InterPro" id="IPR002571">
    <property type="entry name" value="HrcA"/>
</dbReference>
<dbReference type="InterPro" id="IPR021153">
    <property type="entry name" value="HrcA_C"/>
</dbReference>
<dbReference type="InterPro" id="IPR036388">
    <property type="entry name" value="WH-like_DNA-bd_sf"/>
</dbReference>
<dbReference type="InterPro" id="IPR036390">
    <property type="entry name" value="WH_DNA-bd_sf"/>
</dbReference>
<dbReference type="InterPro" id="IPR005104">
    <property type="entry name" value="WHTH_HrcA_DNA-bd"/>
</dbReference>
<dbReference type="InterPro" id="IPR023120">
    <property type="entry name" value="WHTH_transcript_rep_HrcA_IDD"/>
</dbReference>
<dbReference type="NCBIfam" id="TIGR00331">
    <property type="entry name" value="hrcA"/>
    <property type="match status" value="1"/>
</dbReference>
<dbReference type="PANTHER" id="PTHR34824">
    <property type="entry name" value="HEAT-INDUCIBLE TRANSCRIPTION REPRESSOR HRCA"/>
    <property type="match status" value="1"/>
</dbReference>
<dbReference type="PANTHER" id="PTHR34824:SF1">
    <property type="entry name" value="HEAT-INDUCIBLE TRANSCRIPTION REPRESSOR HRCA"/>
    <property type="match status" value="1"/>
</dbReference>
<dbReference type="Pfam" id="PF01628">
    <property type="entry name" value="HrcA"/>
    <property type="match status" value="1"/>
</dbReference>
<dbReference type="Pfam" id="PF03444">
    <property type="entry name" value="HrcA_DNA-bdg"/>
    <property type="match status" value="1"/>
</dbReference>
<dbReference type="PIRSF" id="PIRSF005485">
    <property type="entry name" value="HrcA"/>
    <property type="match status" value="1"/>
</dbReference>
<dbReference type="SUPFAM" id="SSF55781">
    <property type="entry name" value="GAF domain-like"/>
    <property type="match status" value="1"/>
</dbReference>
<dbReference type="SUPFAM" id="SSF46785">
    <property type="entry name" value="Winged helix' DNA-binding domain"/>
    <property type="match status" value="1"/>
</dbReference>
<evidence type="ECO:0000255" key="1">
    <source>
        <dbReference type="HAMAP-Rule" id="MF_00081"/>
    </source>
</evidence>
<gene>
    <name evidence="1" type="primary">hrcA</name>
    <name type="ordered locus">SPy_1763</name>
    <name type="ordered locus">M5005_Spy1500</name>
</gene>
<sequence>MITQRQNDILNLIVELFTQTHEPVGSKALQRTIDSSSATIRNDMAKLEKLGLLEKAHTSSGRMPSPAGFKYFVEHSLRLDSIDEQDIYHVIKAFDFEAFKLEDMLQKASHILAEMTGYTSVILDVEPARQRLTGFDVVQLSNHDALAVMTLDESKPVTVQFAIPRNFLTRDLIAFKAIVEERLLDNSVIDIHYKLRTEIPQIVQKYFVTTDNVLQLFDYVFSELFLETVFVAGKVNSLTYSDLSTYQFLDNEQQVAISLRQSLKEGEMASVQVADSQEAALADVSVLTHKFLIPYRGFGLLSLIGPIDMDYRRSVSLVNIIGKVLAAKLGDYYRYLNSNHYEVH</sequence>
<accession>Q99YC7</accession>
<accession>Q48X07</accession>
<comment type="function">
    <text evidence="1">Negative regulator of class I heat shock genes (grpE-dnaK-dnaJ and groELS operons). Prevents heat-shock induction of these operons.</text>
</comment>
<comment type="similarity">
    <text evidence="1">Belongs to the HrcA family.</text>
</comment>
<name>HRCA_STRP1</name>
<protein>
    <recommendedName>
        <fullName evidence="1">Heat-inducible transcription repressor HrcA</fullName>
    </recommendedName>
</protein>
<reference key="1">
    <citation type="journal article" date="2001" name="Proc. Natl. Acad. Sci. U.S.A.">
        <title>Complete genome sequence of an M1 strain of Streptococcus pyogenes.</title>
        <authorList>
            <person name="Ferretti J.J."/>
            <person name="McShan W.M."/>
            <person name="Ajdic D.J."/>
            <person name="Savic D.J."/>
            <person name="Savic G."/>
            <person name="Lyon K."/>
            <person name="Primeaux C."/>
            <person name="Sezate S."/>
            <person name="Suvorov A.N."/>
            <person name="Kenton S."/>
            <person name="Lai H.S."/>
            <person name="Lin S.P."/>
            <person name="Qian Y."/>
            <person name="Jia H.G."/>
            <person name="Najar F.Z."/>
            <person name="Ren Q."/>
            <person name="Zhu H."/>
            <person name="Song L."/>
            <person name="White J."/>
            <person name="Yuan X."/>
            <person name="Clifton S.W."/>
            <person name="Roe B.A."/>
            <person name="McLaughlin R.E."/>
        </authorList>
    </citation>
    <scope>NUCLEOTIDE SEQUENCE [LARGE SCALE GENOMIC DNA]</scope>
    <source>
        <strain>ATCC 700294 / SF370 / Serotype M1</strain>
    </source>
</reference>
<reference key="2">
    <citation type="journal article" date="2005" name="J. Infect. Dis.">
        <title>Evolutionary origin and emergence of a highly successful clone of serotype M1 group A Streptococcus involved multiple horizontal gene transfer events.</title>
        <authorList>
            <person name="Sumby P."/>
            <person name="Porcella S.F."/>
            <person name="Madrigal A.G."/>
            <person name="Barbian K.D."/>
            <person name="Virtaneva K."/>
            <person name="Ricklefs S.M."/>
            <person name="Sturdevant D.E."/>
            <person name="Graham M.R."/>
            <person name="Vuopio-Varkila J."/>
            <person name="Hoe N.P."/>
            <person name="Musser J.M."/>
        </authorList>
    </citation>
    <scope>NUCLEOTIDE SEQUENCE [LARGE SCALE GENOMIC DNA]</scope>
    <source>
        <strain>ATCC BAA-947 / MGAS5005 / Serotype M1</strain>
    </source>
</reference>
<keyword id="KW-1185">Reference proteome</keyword>
<keyword id="KW-0678">Repressor</keyword>
<keyword id="KW-0346">Stress response</keyword>
<keyword id="KW-0804">Transcription</keyword>
<keyword id="KW-0805">Transcription regulation</keyword>